<gene>
    <name evidence="1" type="primary">pyrC</name>
    <name type="ordered locus">BUAP5A_328</name>
</gene>
<accession>B8D9C1</accession>
<sequence>MSKFVKKIKIIKPDDWHVHLRDNEILNQVIKYTGKFYKRAVIMPNLNSPITSCLKSIAYRNRILKSMHLNYKFKPLMTCYLTNSTSPKELEFGFSKKIFVAAKFYPNGCTTNSKTGIKKISDITPVLECMEKIGMPLLIHGEEINQNIDIYDREAKFIEKTLDPLRKKFPKLKIVLEHITTKESVEYIKNNDVNYLSATITPHHLMLNRNDMFYGGIQPYLYCLPILKKNKHRMALRKAISNGDKHFFLGSDTAPHLHKNKINMLGCAGIFNAPSSLLSYVKVFEEMRALKHLQSFCSENGPKFYNMPINKETITIIKKPCKIIKKINIGRNVIIPFLSGEILNWSIESD</sequence>
<organism>
    <name type="scientific">Buchnera aphidicola subsp. Acyrthosiphon pisum (strain 5A)</name>
    <dbReference type="NCBI Taxonomy" id="563178"/>
    <lineage>
        <taxon>Bacteria</taxon>
        <taxon>Pseudomonadati</taxon>
        <taxon>Pseudomonadota</taxon>
        <taxon>Gammaproteobacteria</taxon>
        <taxon>Enterobacterales</taxon>
        <taxon>Erwiniaceae</taxon>
        <taxon>Buchnera</taxon>
    </lineage>
</organism>
<comment type="function">
    <text evidence="1">Catalyzes the reversible cyclization of carbamoyl aspartate to dihydroorotate.</text>
</comment>
<comment type="catalytic activity">
    <reaction evidence="1">
        <text>(S)-dihydroorotate + H2O = N-carbamoyl-L-aspartate + H(+)</text>
        <dbReference type="Rhea" id="RHEA:24296"/>
        <dbReference type="ChEBI" id="CHEBI:15377"/>
        <dbReference type="ChEBI" id="CHEBI:15378"/>
        <dbReference type="ChEBI" id="CHEBI:30864"/>
        <dbReference type="ChEBI" id="CHEBI:32814"/>
        <dbReference type="EC" id="3.5.2.3"/>
    </reaction>
</comment>
<comment type="cofactor">
    <cofactor evidence="1">
        <name>Zn(2+)</name>
        <dbReference type="ChEBI" id="CHEBI:29105"/>
    </cofactor>
    <text evidence="1">Binds 2 Zn(2+) ions per subunit.</text>
</comment>
<comment type="pathway">
    <text evidence="1">Pyrimidine metabolism; UMP biosynthesis via de novo pathway; (S)-dihydroorotate from bicarbonate: step 3/3.</text>
</comment>
<comment type="subunit">
    <text evidence="1">Homodimer.</text>
</comment>
<comment type="similarity">
    <text evidence="1">Belongs to the metallo-dependent hydrolases superfamily. DHOase family. Class II DHOase subfamily.</text>
</comment>
<evidence type="ECO:0000255" key="1">
    <source>
        <dbReference type="HAMAP-Rule" id="MF_00219"/>
    </source>
</evidence>
<name>PYRC_BUCA5</name>
<reference key="1">
    <citation type="journal article" date="2009" name="Science">
        <title>The dynamics and time scale of ongoing genomic erosion in symbiotic bacteria.</title>
        <authorList>
            <person name="Moran N.A."/>
            <person name="McLaughlin H.J."/>
            <person name="Sorek R."/>
        </authorList>
    </citation>
    <scope>NUCLEOTIDE SEQUENCE [LARGE SCALE GENOMIC DNA]</scope>
    <source>
        <strain>5A</strain>
    </source>
</reference>
<proteinExistence type="inferred from homology"/>
<keyword id="KW-0378">Hydrolase</keyword>
<keyword id="KW-0479">Metal-binding</keyword>
<keyword id="KW-0665">Pyrimidine biosynthesis</keyword>
<keyword id="KW-0862">Zinc</keyword>
<protein>
    <recommendedName>
        <fullName evidence="1">Dihydroorotase</fullName>
        <shortName evidence="1">DHOase</shortName>
        <ecNumber evidence="1">3.5.2.3</ecNumber>
    </recommendedName>
</protein>
<dbReference type="EC" id="3.5.2.3" evidence="1"/>
<dbReference type="EMBL" id="CP001161">
    <property type="protein sequence ID" value="ACL30692.1"/>
    <property type="molecule type" value="Genomic_DNA"/>
</dbReference>
<dbReference type="RefSeq" id="WP_009874288.1">
    <property type="nucleotide sequence ID" value="NC_011833.1"/>
</dbReference>
<dbReference type="SMR" id="B8D9C1"/>
<dbReference type="KEGG" id="bap:BUAP5A_328"/>
<dbReference type="HOGENOM" id="CLU_041558_1_0_6"/>
<dbReference type="OrthoDB" id="9808095at2"/>
<dbReference type="UniPathway" id="UPA00070">
    <property type="reaction ID" value="UER00117"/>
</dbReference>
<dbReference type="Proteomes" id="UP000006904">
    <property type="component" value="Chromosome"/>
</dbReference>
<dbReference type="GO" id="GO:0005829">
    <property type="term" value="C:cytosol"/>
    <property type="evidence" value="ECO:0007669"/>
    <property type="project" value="TreeGrafter"/>
</dbReference>
<dbReference type="GO" id="GO:0004151">
    <property type="term" value="F:dihydroorotase activity"/>
    <property type="evidence" value="ECO:0007669"/>
    <property type="project" value="UniProtKB-UniRule"/>
</dbReference>
<dbReference type="GO" id="GO:0008270">
    <property type="term" value="F:zinc ion binding"/>
    <property type="evidence" value="ECO:0007669"/>
    <property type="project" value="UniProtKB-UniRule"/>
</dbReference>
<dbReference type="GO" id="GO:0006207">
    <property type="term" value="P:'de novo' pyrimidine nucleobase biosynthetic process"/>
    <property type="evidence" value="ECO:0007669"/>
    <property type="project" value="TreeGrafter"/>
</dbReference>
<dbReference type="GO" id="GO:0044205">
    <property type="term" value="P:'de novo' UMP biosynthetic process"/>
    <property type="evidence" value="ECO:0007669"/>
    <property type="project" value="UniProtKB-UniRule"/>
</dbReference>
<dbReference type="CDD" id="cd01294">
    <property type="entry name" value="DHOase"/>
    <property type="match status" value="1"/>
</dbReference>
<dbReference type="Gene3D" id="3.20.20.140">
    <property type="entry name" value="Metal-dependent hydrolases"/>
    <property type="match status" value="1"/>
</dbReference>
<dbReference type="HAMAP" id="MF_00219">
    <property type="entry name" value="PyrC_classII"/>
    <property type="match status" value="1"/>
</dbReference>
<dbReference type="InterPro" id="IPR006680">
    <property type="entry name" value="Amidohydro-rel"/>
</dbReference>
<dbReference type="InterPro" id="IPR004721">
    <property type="entry name" value="DHOdimr"/>
</dbReference>
<dbReference type="InterPro" id="IPR002195">
    <property type="entry name" value="Dihydroorotase_CS"/>
</dbReference>
<dbReference type="InterPro" id="IPR032466">
    <property type="entry name" value="Metal_Hydrolase"/>
</dbReference>
<dbReference type="NCBIfam" id="TIGR00856">
    <property type="entry name" value="pyrC_dimer"/>
    <property type="match status" value="1"/>
</dbReference>
<dbReference type="PANTHER" id="PTHR43137">
    <property type="entry name" value="DIHYDROOROTASE"/>
    <property type="match status" value="1"/>
</dbReference>
<dbReference type="PANTHER" id="PTHR43137:SF1">
    <property type="entry name" value="DIHYDROOROTASE"/>
    <property type="match status" value="1"/>
</dbReference>
<dbReference type="Pfam" id="PF01979">
    <property type="entry name" value="Amidohydro_1"/>
    <property type="match status" value="1"/>
</dbReference>
<dbReference type="PIRSF" id="PIRSF001237">
    <property type="entry name" value="DHOdimr"/>
    <property type="match status" value="1"/>
</dbReference>
<dbReference type="SUPFAM" id="SSF51556">
    <property type="entry name" value="Metallo-dependent hydrolases"/>
    <property type="match status" value="1"/>
</dbReference>
<dbReference type="PROSITE" id="PS00482">
    <property type="entry name" value="DIHYDROOROTASE_1"/>
    <property type="match status" value="1"/>
</dbReference>
<dbReference type="PROSITE" id="PS00483">
    <property type="entry name" value="DIHYDROOROTASE_2"/>
    <property type="match status" value="1"/>
</dbReference>
<feature type="chain" id="PRO_1000193067" description="Dihydroorotase">
    <location>
        <begin position="1"/>
        <end position="350"/>
    </location>
</feature>
<feature type="active site" evidence="1">
    <location>
        <position position="252"/>
    </location>
</feature>
<feature type="binding site" evidence="1">
    <location>
        <position position="17"/>
    </location>
    <ligand>
        <name>Zn(2+)</name>
        <dbReference type="ChEBI" id="CHEBI:29105"/>
        <label>1</label>
    </ligand>
</feature>
<feature type="binding site" evidence="1">
    <location>
        <begin position="19"/>
        <end position="21"/>
    </location>
    <ligand>
        <name>substrate</name>
    </ligand>
</feature>
<feature type="binding site" evidence="1">
    <location>
        <position position="19"/>
    </location>
    <ligand>
        <name>Zn(2+)</name>
        <dbReference type="ChEBI" id="CHEBI:29105"/>
        <label>1</label>
    </ligand>
</feature>
<feature type="binding site" evidence="1">
    <location>
        <position position="45"/>
    </location>
    <ligand>
        <name>substrate</name>
    </ligand>
</feature>
<feature type="binding site" description="via carbamate group" evidence="1">
    <location>
        <position position="103"/>
    </location>
    <ligand>
        <name>Zn(2+)</name>
        <dbReference type="ChEBI" id="CHEBI:29105"/>
        <label>1</label>
    </ligand>
</feature>
<feature type="binding site" description="via carbamate group" evidence="1">
    <location>
        <position position="103"/>
    </location>
    <ligand>
        <name>Zn(2+)</name>
        <dbReference type="ChEBI" id="CHEBI:29105"/>
        <label>2</label>
    </ligand>
</feature>
<feature type="binding site" evidence="1">
    <location>
        <position position="140"/>
    </location>
    <ligand>
        <name>substrate</name>
    </ligand>
</feature>
<feature type="binding site" evidence="1">
    <location>
        <position position="140"/>
    </location>
    <ligand>
        <name>Zn(2+)</name>
        <dbReference type="ChEBI" id="CHEBI:29105"/>
        <label>2</label>
    </ligand>
</feature>
<feature type="binding site" evidence="1">
    <location>
        <position position="178"/>
    </location>
    <ligand>
        <name>Zn(2+)</name>
        <dbReference type="ChEBI" id="CHEBI:29105"/>
        <label>2</label>
    </ligand>
</feature>
<feature type="binding site" evidence="1">
    <location>
        <position position="224"/>
    </location>
    <ligand>
        <name>substrate</name>
    </ligand>
</feature>
<feature type="binding site" evidence="1">
    <location>
        <position position="252"/>
    </location>
    <ligand>
        <name>Zn(2+)</name>
        <dbReference type="ChEBI" id="CHEBI:29105"/>
        <label>1</label>
    </ligand>
</feature>
<feature type="binding site" evidence="1">
    <location>
        <position position="256"/>
    </location>
    <ligand>
        <name>substrate</name>
    </ligand>
</feature>
<feature type="binding site" evidence="1">
    <location>
        <position position="268"/>
    </location>
    <ligand>
        <name>substrate</name>
    </ligand>
</feature>
<feature type="modified residue" description="N6-carboxylysine" evidence="1">
    <location>
        <position position="103"/>
    </location>
</feature>